<keyword id="KW-0560">Oxidoreductase</keyword>
<keyword id="KW-1185">Reference proteome</keyword>
<keyword id="KW-0819">tRNA processing</keyword>
<name>TRHO_BORPE</name>
<feature type="chain" id="PRO_0000161450" description="tRNA uridine(34) hydroxylase">
    <location>
        <begin position="1"/>
        <end position="244"/>
    </location>
</feature>
<feature type="domain" description="Rhodanese" evidence="1">
    <location>
        <begin position="129"/>
        <end position="219"/>
    </location>
</feature>
<feature type="active site" description="Cysteine persulfide intermediate" evidence="1">
    <location>
        <position position="183"/>
    </location>
</feature>
<evidence type="ECO:0000255" key="1">
    <source>
        <dbReference type="HAMAP-Rule" id="MF_00469"/>
    </source>
</evidence>
<organism>
    <name type="scientific">Bordetella pertussis (strain Tohama I / ATCC BAA-589 / NCTC 13251)</name>
    <dbReference type="NCBI Taxonomy" id="257313"/>
    <lineage>
        <taxon>Bacteria</taxon>
        <taxon>Pseudomonadati</taxon>
        <taxon>Pseudomonadota</taxon>
        <taxon>Betaproteobacteria</taxon>
        <taxon>Burkholderiales</taxon>
        <taxon>Alcaligenaceae</taxon>
        <taxon>Bordetella</taxon>
    </lineage>
</organism>
<reference key="1">
    <citation type="journal article" date="2003" name="Nat. Genet.">
        <title>Comparative analysis of the genome sequences of Bordetella pertussis, Bordetella parapertussis and Bordetella bronchiseptica.</title>
        <authorList>
            <person name="Parkhill J."/>
            <person name="Sebaihia M."/>
            <person name="Preston A."/>
            <person name="Murphy L.D."/>
            <person name="Thomson N.R."/>
            <person name="Harris D.E."/>
            <person name="Holden M.T.G."/>
            <person name="Churcher C.M."/>
            <person name="Bentley S.D."/>
            <person name="Mungall K.L."/>
            <person name="Cerdeno-Tarraga A.-M."/>
            <person name="Temple L."/>
            <person name="James K.D."/>
            <person name="Harris B."/>
            <person name="Quail M.A."/>
            <person name="Achtman M."/>
            <person name="Atkin R."/>
            <person name="Baker S."/>
            <person name="Basham D."/>
            <person name="Bason N."/>
            <person name="Cherevach I."/>
            <person name="Chillingworth T."/>
            <person name="Collins M."/>
            <person name="Cronin A."/>
            <person name="Davis P."/>
            <person name="Doggett J."/>
            <person name="Feltwell T."/>
            <person name="Goble A."/>
            <person name="Hamlin N."/>
            <person name="Hauser H."/>
            <person name="Holroyd S."/>
            <person name="Jagels K."/>
            <person name="Leather S."/>
            <person name="Moule S."/>
            <person name="Norberczak H."/>
            <person name="O'Neil S."/>
            <person name="Ormond D."/>
            <person name="Price C."/>
            <person name="Rabbinowitsch E."/>
            <person name="Rutter S."/>
            <person name="Sanders M."/>
            <person name="Saunders D."/>
            <person name="Seeger K."/>
            <person name="Sharp S."/>
            <person name="Simmonds M."/>
            <person name="Skelton J."/>
            <person name="Squares R."/>
            <person name="Squares S."/>
            <person name="Stevens K."/>
            <person name="Unwin L."/>
            <person name="Whitehead S."/>
            <person name="Barrell B.G."/>
            <person name="Maskell D.J."/>
        </authorList>
    </citation>
    <scope>NUCLEOTIDE SEQUENCE [LARGE SCALE GENOMIC DNA]</scope>
    <source>
        <strain>Tohama I / ATCC BAA-589 / NCTC 13251</strain>
    </source>
</reference>
<dbReference type="EC" id="1.14.-.-" evidence="1"/>
<dbReference type="EMBL" id="BX640411">
    <property type="protein sequence ID" value="CAE40558.1"/>
    <property type="molecule type" value="Genomic_DNA"/>
</dbReference>
<dbReference type="RefSeq" id="NP_879069.1">
    <property type="nucleotide sequence ID" value="NC_002929.2"/>
</dbReference>
<dbReference type="RefSeq" id="WP_003808370.1">
    <property type="nucleotide sequence ID" value="NZ_CP039022.1"/>
</dbReference>
<dbReference type="SMR" id="Q7W0F8"/>
<dbReference type="STRING" id="257313.BP0179"/>
<dbReference type="PaxDb" id="257313-BP0179"/>
<dbReference type="KEGG" id="bpe:BP0179"/>
<dbReference type="PATRIC" id="fig|257313.5.peg.189"/>
<dbReference type="eggNOG" id="COG1054">
    <property type="taxonomic scope" value="Bacteria"/>
</dbReference>
<dbReference type="HOGENOM" id="CLU_038878_0_1_4"/>
<dbReference type="Proteomes" id="UP000002676">
    <property type="component" value="Chromosome"/>
</dbReference>
<dbReference type="GO" id="GO:0016705">
    <property type="term" value="F:oxidoreductase activity, acting on paired donors, with incorporation or reduction of molecular oxygen"/>
    <property type="evidence" value="ECO:0007669"/>
    <property type="project" value="UniProtKB-UniRule"/>
</dbReference>
<dbReference type="GO" id="GO:0006400">
    <property type="term" value="P:tRNA modification"/>
    <property type="evidence" value="ECO:0007669"/>
    <property type="project" value="UniProtKB-UniRule"/>
</dbReference>
<dbReference type="CDD" id="cd01518">
    <property type="entry name" value="RHOD_YceA"/>
    <property type="match status" value="1"/>
</dbReference>
<dbReference type="Gene3D" id="3.30.70.100">
    <property type="match status" value="1"/>
</dbReference>
<dbReference type="Gene3D" id="3.40.250.10">
    <property type="entry name" value="Rhodanese-like domain"/>
    <property type="match status" value="1"/>
</dbReference>
<dbReference type="HAMAP" id="MF_00469">
    <property type="entry name" value="TrhO"/>
    <property type="match status" value="1"/>
</dbReference>
<dbReference type="InterPro" id="IPR001763">
    <property type="entry name" value="Rhodanese-like_dom"/>
</dbReference>
<dbReference type="InterPro" id="IPR036873">
    <property type="entry name" value="Rhodanese-like_dom_sf"/>
</dbReference>
<dbReference type="InterPro" id="IPR020936">
    <property type="entry name" value="TrhO"/>
</dbReference>
<dbReference type="InterPro" id="IPR040503">
    <property type="entry name" value="TRHO_N"/>
</dbReference>
<dbReference type="NCBIfam" id="NF003703">
    <property type="entry name" value="PRK05320.1"/>
    <property type="match status" value="1"/>
</dbReference>
<dbReference type="PANTHER" id="PTHR43268:SF3">
    <property type="entry name" value="RHODANESE-LIKE DOMAIN-CONTAINING PROTEIN 7-RELATED"/>
    <property type="match status" value="1"/>
</dbReference>
<dbReference type="PANTHER" id="PTHR43268">
    <property type="entry name" value="THIOSULFATE SULFURTRANSFERASE/RHODANESE-LIKE DOMAIN-CONTAINING PROTEIN 2"/>
    <property type="match status" value="1"/>
</dbReference>
<dbReference type="Pfam" id="PF00581">
    <property type="entry name" value="Rhodanese"/>
    <property type="match status" value="1"/>
</dbReference>
<dbReference type="Pfam" id="PF17773">
    <property type="entry name" value="UPF0176_N"/>
    <property type="match status" value="1"/>
</dbReference>
<dbReference type="SMART" id="SM00450">
    <property type="entry name" value="RHOD"/>
    <property type="match status" value="1"/>
</dbReference>
<dbReference type="SUPFAM" id="SSF52821">
    <property type="entry name" value="Rhodanese/Cell cycle control phosphatase"/>
    <property type="match status" value="1"/>
</dbReference>
<dbReference type="PROSITE" id="PS50206">
    <property type="entry name" value="RHODANESE_3"/>
    <property type="match status" value="1"/>
</dbReference>
<proteinExistence type="inferred from homology"/>
<sequence>MTAVVNIAAYKFVSIANPADLREPMLEQAGQRQLKGTVLLAPEGINLFLAGAADAIEGFLRWLRADARFADLQAKYSESARMPFRKLLVKVKREIIRMDHPAIRPEAGRAPAVDAATLRRWLAQGRDDQGRELVMLDTRNAFEVEVGTFRGALDWRIERFTQFPQAVRDNQAALAGKTVVSFCTGGIRCEKAAIYMAEAGIEHVYQLEGGILKYFEETDGAGFDGACFVFDERVALDAALAPQA</sequence>
<accession>Q7W0F8</accession>
<comment type="function">
    <text evidence="1">Catalyzes oxygen-dependent 5-hydroxyuridine (ho5U) modification at position 34 in tRNAs.</text>
</comment>
<comment type="catalytic activity">
    <reaction evidence="1">
        <text>uridine(34) in tRNA + AH2 + O2 = 5-hydroxyuridine(34) in tRNA + A + H2O</text>
        <dbReference type="Rhea" id="RHEA:64224"/>
        <dbReference type="Rhea" id="RHEA-COMP:11727"/>
        <dbReference type="Rhea" id="RHEA-COMP:13381"/>
        <dbReference type="ChEBI" id="CHEBI:13193"/>
        <dbReference type="ChEBI" id="CHEBI:15377"/>
        <dbReference type="ChEBI" id="CHEBI:15379"/>
        <dbReference type="ChEBI" id="CHEBI:17499"/>
        <dbReference type="ChEBI" id="CHEBI:65315"/>
        <dbReference type="ChEBI" id="CHEBI:136877"/>
    </reaction>
</comment>
<comment type="similarity">
    <text evidence="1">Belongs to the TrhO family.</text>
</comment>
<gene>
    <name evidence="1" type="primary">trhO</name>
    <name type="ordered locus">BP0179</name>
</gene>
<protein>
    <recommendedName>
        <fullName evidence="1">tRNA uridine(34) hydroxylase</fullName>
        <ecNumber evidence="1">1.14.-.-</ecNumber>
    </recommendedName>
    <alternativeName>
        <fullName evidence="1">tRNA hydroxylation protein O</fullName>
    </alternativeName>
</protein>